<sequence length="542" mass="59420">MSTSLSAWQSLREHAAKIRHTHMRDWFTGPQGQARSVRLTVEACGLTLDYAKNRVTEDTLSLLFALARQARVCERRDAMFAGEPVNTTERRAALHMALRAHPGDGYRALGVPVEADVSAVLAQMERFARDVRSGSWTGFDGRAITDVVNIGIGGSDLGPRMVCRALEQDTEPGPRLHFVANVDGYDLARTLARLDAATTLVIVCSKTFTTLETMANARTARDWFLRHGVTHSDLARHFVAVSTNRDAVAAFGIDPVNMFPFWDWVGGRFSLWSAVGLSIAVAIGFDRFRQLLDGARAMDRHFAGAPPEQNLPMILGLLDVWYRSFLGTASRCVAPYCEPLDLLPAFLQQLEMESNGKSVQHDGAALEAGSAAVVWGTTGTNGQHAYFQMVHQGSQLVPVDFIACLQPHSDLPGHHTKLLANCFAQGEALLRGRTADEVRAEGKADEALVPHLVFEGNRPSNTLLLQRLDAFHLGALLAMSEHRTFVQGALWNINPFDQWGVELGKMLARPIERELEGAPPQPHDASTAALIRRAAQFCASTD</sequence>
<accession>Q471B8</accession>
<feature type="chain" id="PRO_0000230930" description="Glucose-6-phosphate isomerase 2">
    <location>
        <begin position="1"/>
        <end position="542"/>
    </location>
</feature>
<feature type="active site" description="Proton donor" evidence="1">
    <location>
        <position position="353"/>
    </location>
</feature>
<feature type="active site" evidence="1">
    <location>
        <position position="384"/>
    </location>
</feature>
<feature type="active site" evidence="1">
    <location>
        <position position="505"/>
    </location>
</feature>
<gene>
    <name evidence="1" type="primary">pgi2</name>
    <name type="ordered locus">Reut_A1649</name>
</gene>
<keyword id="KW-0963">Cytoplasm</keyword>
<keyword id="KW-0312">Gluconeogenesis</keyword>
<keyword id="KW-0324">Glycolysis</keyword>
<keyword id="KW-0413">Isomerase</keyword>
<protein>
    <recommendedName>
        <fullName evidence="1">Glucose-6-phosphate isomerase 2</fullName>
        <shortName evidence="1">GPI 2</shortName>
        <ecNumber evidence="1">5.3.1.9</ecNumber>
    </recommendedName>
    <alternativeName>
        <fullName evidence="1">Phosphoglucose isomerase 2</fullName>
        <shortName evidence="1">PGI 2</shortName>
    </alternativeName>
    <alternativeName>
        <fullName evidence="1">Phosphohexose isomerase 2</fullName>
        <shortName evidence="1">PHI 2</shortName>
    </alternativeName>
</protein>
<organism>
    <name type="scientific">Cupriavidus pinatubonensis (strain JMP 134 / LMG 1197)</name>
    <name type="common">Cupriavidus necator (strain JMP 134)</name>
    <dbReference type="NCBI Taxonomy" id="264198"/>
    <lineage>
        <taxon>Bacteria</taxon>
        <taxon>Pseudomonadati</taxon>
        <taxon>Pseudomonadota</taxon>
        <taxon>Betaproteobacteria</taxon>
        <taxon>Burkholderiales</taxon>
        <taxon>Burkholderiaceae</taxon>
        <taxon>Cupriavidus</taxon>
    </lineage>
</organism>
<evidence type="ECO:0000255" key="1">
    <source>
        <dbReference type="HAMAP-Rule" id="MF_00473"/>
    </source>
</evidence>
<name>G6PI2_CUPPJ</name>
<dbReference type="EC" id="5.3.1.9" evidence="1"/>
<dbReference type="EMBL" id="CP000090">
    <property type="protein sequence ID" value="AAZ61015.1"/>
    <property type="molecule type" value="Genomic_DNA"/>
</dbReference>
<dbReference type="SMR" id="Q471B8"/>
<dbReference type="STRING" id="264198.Reut_A1649"/>
<dbReference type="KEGG" id="reu:Reut_A1649"/>
<dbReference type="eggNOG" id="COG0166">
    <property type="taxonomic scope" value="Bacteria"/>
</dbReference>
<dbReference type="HOGENOM" id="CLU_017947_3_1_4"/>
<dbReference type="OrthoDB" id="140919at2"/>
<dbReference type="UniPathway" id="UPA00109">
    <property type="reaction ID" value="UER00181"/>
</dbReference>
<dbReference type="UniPathway" id="UPA00138"/>
<dbReference type="GO" id="GO:0005829">
    <property type="term" value="C:cytosol"/>
    <property type="evidence" value="ECO:0007669"/>
    <property type="project" value="TreeGrafter"/>
</dbReference>
<dbReference type="GO" id="GO:0097367">
    <property type="term" value="F:carbohydrate derivative binding"/>
    <property type="evidence" value="ECO:0007669"/>
    <property type="project" value="InterPro"/>
</dbReference>
<dbReference type="GO" id="GO:0004347">
    <property type="term" value="F:glucose-6-phosphate isomerase activity"/>
    <property type="evidence" value="ECO:0007669"/>
    <property type="project" value="UniProtKB-UniRule"/>
</dbReference>
<dbReference type="GO" id="GO:0048029">
    <property type="term" value="F:monosaccharide binding"/>
    <property type="evidence" value="ECO:0007669"/>
    <property type="project" value="TreeGrafter"/>
</dbReference>
<dbReference type="GO" id="GO:0006094">
    <property type="term" value="P:gluconeogenesis"/>
    <property type="evidence" value="ECO:0007669"/>
    <property type="project" value="UniProtKB-UniRule"/>
</dbReference>
<dbReference type="GO" id="GO:0051156">
    <property type="term" value="P:glucose 6-phosphate metabolic process"/>
    <property type="evidence" value="ECO:0007669"/>
    <property type="project" value="TreeGrafter"/>
</dbReference>
<dbReference type="GO" id="GO:0006096">
    <property type="term" value="P:glycolytic process"/>
    <property type="evidence" value="ECO:0007669"/>
    <property type="project" value="UniProtKB-UniRule"/>
</dbReference>
<dbReference type="CDD" id="cd05015">
    <property type="entry name" value="SIS_PGI_1"/>
    <property type="match status" value="1"/>
</dbReference>
<dbReference type="CDD" id="cd05016">
    <property type="entry name" value="SIS_PGI_2"/>
    <property type="match status" value="1"/>
</dbReference>
<dbReference type="Gene3D" id="1.10.1390.10">
    <property type="match status" value="1"/>
</dbReference>
<dbReference type="Gene3D" id="3.40.50.10490">
    <property type="entry name" value="Glucose-6-phosphate isomerase like protein, domain 1"/>
    <property type="match status" value="2"/>
</dbReference>
<dbReference type="HAMAP" id="MF_00473">
    <property type="entry name" value="G6P_isomerase"/>
    <property type="match status" value="1"/>
</dbReference>
<dbReference type="InterPro" id="IPR001672">
    <property type="entry name" value="G6P_Isomerase"/>
</dbReference>
<dbReference type="InterPro" id="IPR023096">
    <property type="entry name" value="G6P_Isomerase_C"/>
</dbReference>
<dbReference type="InterPro" id="IPR018189">
    <property type="entry name" value="Phosphoglucose_isomerase_CS"/>
</dbReference>
<dbReference type="InterPro" id="IPR046348">
    <property type="entry name" value="SIS_dom_sf"/>
</dbReference>
<dbReference type="InterPro" id="IPR035476">
    <property type="entry name" value="SIS_PGI_1"/>
</dbReference>
<dbReference type="InterPro" id="IPR035482">
    <property type="entry name" value="SIS_PGI_2"/>
</dbReference>
<dbReference type="NCBIfam" id="NF001211">
    <property type="entry name" value="PRK00179.1"/>
    <property type="match status" value="1"/>
</dbReference>
<dbReference type="PANTHER" id="PTHR11469">
    <property type="entry name" value="GLUCOSE-6-PHOSPHATE ISOMERASE"/>
    <property type="match status" value="1"/>
</dbReference>
<dbReference type="PANTHER" id="PTHR11469:SF1">
    <property type="entry name" value="GLUCOSE-6-PHOSPHATE ISOMERASE"/>
    <property type="match status" value="1"/>
</dbReference>
<dbReference type="Pfam" id="PF00342">
    <property type="entry name" value="PGI"/>
    <property type="match status" value="1"/>
</dbReference>
<dbReference type="PRINTS" id="PR00662">
    <property type="entry name" value="G6PISOMERASE"/>
</dbReference>
<dbReference type="SUPFAM" id="SSF53697">
    <property type="entry name" value="SIS domain"/>
    <property type="match status" value="1"/>
</dbReference>
<dbReference type="PROSITE" id="PS00765">
    <property type="entry name" value="P_GLUCOSE_ISOMERASE_1"/>
    <property type="match status" value="1"/>
</dbReference>
<dbReference type="PROSITE" id="PS00174">
    <property type="entry name" value="P_GLUCOSE_ISOMERASE_2"/>
    <property type="match status" value="1"/>
</dbReference>
<dbReference type="PROSITE" id="PS51463">
    <property type="entry name" value="P_GLUCOSE_ISOMERASE_3"/>
    <property type="match status" value="1"/>
</dbReference>
<comment type="function">
    <text evidence="1">Catalyzes the reversible isomerization of glucose-6-phosphate to fructose-6-phosphate.</text>
</comment>
<comment type="catalytic activity">
    <reaction evidence="1">
        <text>alpha-D-glucose 6-phosphate = beta-D-fructose 6-phosphate</text>
        <dbReference type="Rhea" id="RHEA:11816"/>
        <dbReference type="ChEBI" id="CHEBI:57634"/>
        <dbReference type="ChEBI" id="CHEBI:58225"/>
        <dbReference type="EC" id="5.3.1.9"/>
    </reaction>
</comment>
<comment type="pathway">
    <text evidence="1">Carbohydrate biosynthesis; gluconeogenesis.</text>
</comment>
<comment type="pathway">
    <text evidence="1">Carbohydrate degradation; glycolysis; D-glyceraldehyde 3-phosphate and glycerone phosphate from D-glucose: step 2/4.</text>
</comment>
<comment type="subcellular location">
    <subcellularLocation>
        <location evidence="1">Cytoplasm</location>
    </subcellularLocation>
</comment>
<comment type="similarity">
    <text evidence="1">Belongs to the GPI family.</text>
</comment>
<proteinExistence type="inferred from homology"/>
<reference key="1">
    <citation type="journal article" date="2010" name="PLoS ONE">
        <title>The complete multipartite genome sequence of Cupriavidus necator JMP134, a versatile pollutant degrader.</title>
        <authorList>
            <person name="Lykidis A."/>
            <person name="Perez-Pantoja D."/>
            <person name="Ledger T."/>
            <person name="Mavromatis K."/>
            <person name="Anderson I.J."/>
            <person name="Ivanova N.N."/>
            <person name="Hooper S.D."/>
            <person name="Lapidus A."/>
            <person name="Lucas S."/>
            <person name="Gonzalez B."/>
            <person name="Kyrpides N.C."/>
        </authorList>
    </citation>
    <scope>NUCLEOTIDE SEQUENCE [LARGE SCALE GENOMIC DNA]</scope>
    <source>
        <strain>JMP134 / LMG 1197</strain>
    </source>
</reference>